<keyword id="KW-0025">Alternative splicing</keyword>
<keyword id="KW-0238">DNA-binding</keyword>
<keyword id="KW-1017">Isopeptide bond</keyword>
<keyword id="KW-0479">Metal-binding</keyword>
<keyword id="KW-0539">Nucleus</keyword>
<keyword id="KW-1267">Proteomics identification</keyword>
<keyword id="KW-1185">Reference proteome</keyword>
<keyword id="KW-0677">Repeat</keyword>
<keyword id="KW-0804">Transcription</keyword>
<keyword id="KW-0805">Transcription regulation</keyword>
<keyword id="KW-0832">Ubl conjugation</keyword>
<keyword id="KW-0862">Zinc</keyword>
<keyword id="KW-0863">Zinc-finger</keyword>
<gene>
    <name type="primary">ZNF250</name>
    <name type="synonym">ZNF647</name>
</gene>
<comment type="function">
    <text>May be involved in transcriptional regulation.</text>
</comment>
<comment type="interaction">
    <interactant intactId="EBI-10177272">
        <id>P15622-3</id>
    </interactant>
    <interactant intactId="EBI-12239063">
        <id>Q9ULJ7-2</id>
        <label>ANKRD50</label>
    </interactant>
    <organismsDiffer>false</organismsDiffer>
    <experiments>3</experiments>
</comment>
<comment type="interaction">
    <interactant intactId="EBI-10177272">
        <id>P15622-3</id>
    </interactant>
    <interactant intactId="EBI-1044593">
        <id>Q9NRW3</id>
        <label>APOBEC3C</label>
    </interactant>
    <organismsDiffer>false</organismsDiffer>
    <experiments>3</experiments>
</comment>
<comment type="interaction">
    <interactant intactId="EBI-10177272">
        <id>P15622-3</id>
    </interactant>
    <interactant intactId="EBI-3866279">
        <id>Q9BWT7</id>
        <label>CARD10</label>
    </interactant>
    <organismsDiffer>false</organismsDiffer>
    <experiments>3</experiments>
</comment>
<comment type="interaction">
    <interactant intactId="EBI-10177272">
        <id>P15622-3</id>
    </interactant>
    <interactant intactId="EBI-751319">
        <id>Q9H257</id>
        <label>CARD9</label>
    </interactant>
    <organismsDiffer>false</organismsDiffer>
    <experiments>3</experiments>
</comment>
<comment type="interaction">
    <interactant intactId="EBI-10177272">
        <id>P15622-3</id>
    </interactant>
    <interactant intactId="EBI-11530605">
        <id>Q9H257-2</id>
        <label>CARD9</label>
    </interactant>
    <organismsDiffer>false</organismsDiffer>
    <experiments>3</experiments>
</comment>
<comment type="interaction">
    <interactant intactId="EBI-10177272">
        <id>P15622-3</id>
    </interactant>
    <interactant intactId="EBI-11524851">
        <id>Q8NA61-2</id>
        <label>CBY2</label>
    </interactant>
    <organismsDiffer>false</organismsDiffer>
    <experiments>3</experiments>
</comment>
<comment type="interaction">
    <interactant intactId="EBI-10177272">
        <id>P15622-3</id>
    </interactant>
    <interactant intactId="EBI-10171570">
        <id>Q68D86</id>
        <label>CCDC102B</label>
    </interactant>
    <organismsDiffer>false</organismsDiffer>
    <experiments>3</experiments>
</comment>
<comment type="interaction">
    <interactant intactId="EBI-10177272">
        <id>P15622-3</id>
    </interactant>
    <interactant intactId="EBI-11977221">
        <id>Q86Z20</id>
        <label>CCDC125</label>
    </interactant>
    <organismsDiffer>false</organismsDiffer>
    <experiments>3</experiments>
</comment>
<comment type="interaction">
    <interactant intactId="EBI-10177272">
        <id>P15622-3</id>
    </interactant>
    <interactant intactId="EBI-10171416">
        <id>Q96JN2-2</id>
        <label>CCDC136</label>
    </interactant>
    <organismsDiffer>false</organismsDiffer>
    <experiments>3</experiments>
</comment>
<comment type="interaction">
    <interactant intactId="EBI-10177272">
        <id>P15622-3</id>
    </interactant>
    <interactant intactId="EBI-1045350">
        <id>Q16204</id>
        <label>CCDC6</label>
    </interactant>
    <organismsDiffer>false</organismsDiffer>
    <experiments>3</experiments>
</comment>
<comment type="interaction">
    <interactant intactId="EBI-10177272">
        <id>P15622-3</id>
    </interactant>
    <interactant intactId="EBI-5278764">
        <id>Q96GN5</id>
        <label>CDCA7L</label>
    </interactant>
    <organismsDiffer>false</organismsDiffer>
    <experiments>3</experiments>
</comment>
<comment type="interaction">
    <interactant intactId="EBI-10177272">
        <id>P15622-3</id>
    </interactant>
    <interactant intactId="EBI-1181367">
        <id>Q01850</id>
        <label>CDR2</label>
    </interactant>
    <organismsDiffer>false</organismsDiffer>
    <experiments>3</experiments>
</comment>
<comment type="interaction">
    <interactant intactId="EBI-10177272">
        <id>P15622-3</id>
    </interactant>
    <interactant intactId="EBI-11063830">
        <id>Q86X02</id>
        <label>CDR2L</label>
    </interactant>
    <organismsDiffer>false</organismsDiffer>
    <experiments>3</experiments>
</comment>
<comment type="interaction">
    <interactant intactId="EBI-10177272">
        <id>P15622-3</id>
    </interactant>
    <interactant intactId="EBI-11522539">
        <id>Q96MT8-3</id>
        <label>CEP63</label>
    </interactant>
    <organismsDiffer>false</organismsDiffer>
    <experiments>3</experiments>
</comment>
<comment type="interaction">
    <interactant intactId="EBI-10177272">
        <id>P15622-3</id>
    </interactant>
    <interactant intactId="EBI-13070008">
        <id>Q9H069</id>
        <label>DRC3</label>
    </interactant>
    <organismsDiffer>false</organismsDiffer>
    <experiments>3</experiments>
</comment>
<comment type="interaction">
    <interactant intactId="EBI-10177272">
        <id>P15622-3</id>
    </interactant>
    <interactant intactId="EBI-744506">
        <id>Q86V42</id>
        <label>FAM124A</label>
    </interactant>
    <organismsDiffer>false</organismsDiffer>
    <experiments>3</experiments>
</comment>
<comment type="interaction">
    <interactant intactId="EBI-10177272">
        <id>P15622-3</id>
    </interactant>
    <interactant intactId="EBI-719941">
        <id>Q3B820</id>
        <label>FAM161A</label>
    </interactant>
    <organismsDiffer>false</organismsDiffer>
    <experiments>3</experiments>
</comment>
<comment type="interaction">
    <interactant intactId="EBI-10177272">
        <id>P15622-3</id>
    </interactant>
    <interactant intactId="EBI-10297077">
        <id>Q9BRP7</id>
        <label>FDXACB1</label>
    </interactant>
    <organismsDiffer>false</organismsDiffer>
    <experiments>3</experiments>
</comment>
<comment type="interaction">
    <interactant intactId="EBI-10177272">
        <id>P15622-3</id>
    </interactant>
    <interactant intactId="EBI-750641">
        <id>Q5TD97</id>
        <label>FHL5</label>
    </interactant>
    <organismsDiffer>false</organismsDiffer>
    <experiments>5</experiments>
</comment>
<comment type="interaction">
    <interactant intactId="EBI-10177272">
        <id>P15622-3</id>
    </interactant>
    <interactant intactId="EBI-10172181">
        <id>Q53SE7</id>
        <label>FLJ13057</label>
    </interactant>
    <organismsDiffer>false</organismsDiffer>
    <experiments>3</experiments>
</comment>
<comment type="interaction">
    <interactant intactId="EBI-10177272">
        <id>P15622-3</id>
    </interactant>
    <interactant intactId="EBI-1052570">
        <id>O95995</id>
        <label>GAS8</label>
    </interactant>
    <organismsDiffer>false</organismsDiffer>
    <experiments>3</experiments>
</comment>
<comment type="interaction">
    <interactant intactId="EBI-10177272">
        <id>P15622-3</id>
    </interactant>
    <interactant intactId="EBI-371669">
        <id>O75496</id>
        <label>GMNN</label>
    </interactant>
    <organismsDiffer>false</organismsDiffer>
    <experiments>3</experiments>
</comment>
<comment type="interaction">
    <interactant intactId="EBI-10177272">
        <id>P15622-3</id>
    </interactant>
    <interactant intactId="EBI-1104907">
        <id>Q3T906</id>
        <label>GNPTAB</label>
    </interactant>
    <organismsDiffer>false</organismsDiffer>
    <experiments>3</experiments>
</comment>
<comment type="interaction">
    <interactant intactId="EBI-10177272">
        <id>P15622-3</id>
    </interactant>
    <interactant intactId="EBI-618309">
        <id>Q08379</id>
        <label>GOLGA2</label>
    </interactant>
    <organismsDiffer>false</organismsDiffer>
    <experiments>8</experiments>
</comment>
<comment type="interaction">
    <interactant intactId="EBI-10177272">
        <id>P15622-3</id>
    </interactant>
    <interactant intactId="EBI-5916454">
        <id>A6NEM1</id>
        <label>GOLGA6L9</label>
    </interactant>
    <organismsDiffer>false</organismsDiffer>
    <experiments>3</experiments>
</comment>
<comment type="interaction">
    <interactant intactId="EBI-10177272">
        <id>P15622-3</id>
    </interactant>
    <interactant intactId="EBI-740418">
        <id>O75791</id>
        <label>GRAP2</label>
    </interactant>
    <organismsDiffer>false</organismsDiffer>
    <experiments>3</experiments>
</comment>
<comment type="interaction">
    <interactant intactId="EBI-10177272">
        <id>P15622-3</id>
    </interactant>
    <interactant intactId="EBI-717919">
        <id>Q4V328</id>
        <label>GRIPAP1</label>
    </interactant>
    <organismsDiffer>false</organismsDiffer>
    <experiments>3</experiments>
</comment>
<comment type="interaction">
    <interactant intactId="EBI-10177272">
        <id>P15622-3</id>
    </interactant>
    <interactant intactId="EBI-11978177">
        <id>Q96NT3-2</id>
        <label>GUCD1</label>
    </interactant>
    <organismsDiffer>false</organismsDiffer>
    <experiments>5</experiments>
</comment>
<comment type="interaction">
    <interactant intactId="EBI-10177272">
        <id>P15622-3</id>
    </interactant>
    <interactant intactId="EBI-2549423">
        <id>Q6NT76</id>
        <label>HMBOX1</label>
    </interactant>
    <organismsDiffer>false</organismsDiffer>
    <experiments>3</experiments>
</comment>
<comment type="interaction">
    <interactant intactId="EBI-10177272">
        <id>P15622-3</id>
    </interactant>
    <interactant intactId="EBI-10961706">
        <id>Q96ED9-2</id>
        <label>HOOK2</label>
    </interactant>
    <organismsDiffer>false</organismsDiffer>
    <experiments>3</experiments>
</comment>
<comment type="interaction">
    <interactant intactId="EBI-10177272">
        <id>P15622-3</id>
    </interactant>
    <interactant intactId="EBI-7116203">
        <id>O75031</id>
        <label>HSF2BP</label>
    </interactant>
    <organismsDiffer>false</organismsDiffer>
    <experiments>3</experiments>
</comment>
<comment type="interaction">
    <interactant intactId="EBI-10177272">
        <id>P15622-3</id>
    </interactant>
    <interactant intactId="EBI-749265">
        <id>Q8N6L0</id>
        <label>KASH5</label>
    </interactant>
    <organismsDiffer>false</organismsDiffer>
    <experiments>3</experiments>
</comment>
<comment type="interaction">
    <interactant intactId="EBI-10177272">
        <id>P15622-3</id>
    </interactant>
    <interactant intactId="EBI-14069005">
        <id>Q9BVG8-5</id>
        <label>KIFC3</label>
    </interactant>
    <organismsDiffer>false</organismsDiffer>
    <experiments>3</experiments>
</comment>
<comment type="interaction">
    <interactant intactId="EBI-10177272">
        <id>P15622-3</id>
    </interactant>
    <interactant intactId="EBI-948001">
        <id>Q15323</id>
        <label>KRT31</label>
    </interactant>
    <organismsDiffer>false</organismsDiffer>
    <experiments>3</experiments>
</comment>
<comment type="interaction">
    <interactant intactId="EBI-10177272">
        <id>P15622-3</id>
    </interactant>
    <interactant intactId="EBI-10171697">
        <id>Q6A162</id>
        <label>KRT40</label>
    </interactant>
    <organismsDiffer>false</organismsDiffer>
    <experiments>6</experiments>
</comment>
<comment type="interaction">
    <interactant intactId="EBI-10177272">
        <id>P15622-3</id>
    </interactant>
    <interactant intactId="EBI-10172290">
        <id>P60409</id>
        <label>KRTAP10-7</label>
    </interactant>
    <organismsDiffer>false</organismsDiffer>
    <experiments>3</experiments>
</comment>
<comment type="interaction">
    <interactant intactId="EBI-10177272">
        <id>P15622-3</id>
    </interactant>
    <interactant intactId="EBI-10171774">
        <id>P60410</id>
        <label>KRTAP10-8</label>
    </interactant>
    <organismsDiffer>false</organismsDiffer>
    <experiments>3</experiments>
</comment>
<comment type="interaction">
    <interactant intactId="EBI-10177272">
        <id>P15622-3</id>
    </interactant>
    <interactant intactId="EBI-740738">
        <id>O95751</id>
        <label>LDOC1</label>
    </interactant>
    <organismsDiffer>false</organismsDiffer>
    <experiments>3</experiments>
</comment>
<comment type="interaction">
    <interactant intactId="EBI-10177272">
        <id>P15622-3</id>
    </interactant>
    <interactant intactId="EBI-11959475">
        <id>P25791-3</id>
        <label>LMO2</label>
    </interactant>
    <organismsDiffer>false</organismsDiffer>
    <experiments>3</experiments>
</comment>
<comment type="interaction">
    <interactant intactId="EBI-10177272">
        <id>P15622-3</id>
    </interactant>
    <interactant intactId="EBI-1216080">
        <id>Q9Y250</id>
        <label>LZTS1</label>
    </interactant>
    <organismsDiffer>false</organismsDiffer>
    <experiments>3</experiments>
</comment>
<comment type="interaction">
    <interactant intactId="EBI-10177272">
        <id>P15622-3</id>
    </interactant>
    <interactant intactId="EBI-741037">
        <id>Q9BRK4</id>
        <label>LZTS2</label>
    </interactant>
    <organismsDiffer>false</organismsDiffer>
    <experiments>3</experiments>
</comment>
<comment type="interaction">
    <interactant intactId="EBI-10177272">
        <id>P15622-3</id>
    </interactant>
    <interactant intactId="EBI-746778">
        <id>Q96A72</id>
        <label>MAGOHB</label>
    </interactant>
    <organismsDiffer>false</organismsDiffer>
    <experiments>3</experiments>
</comment>
<comment type="interaction">
    <interactant intactId="EBI-10177272">
        <id>P15622-3</id>
    </interactant>
    <interactant intactId="EBI-16439278">
        <id>Q6FHY5</id>
        <label>MEOX2</label>
    </interactant>
    <organismsDiffer>false</organismsDiffer>
    <experiments>3</experiments>
</comment>
<comment type="interaction">
    <interactant intactId="EBI-10177272">
        <id>P15622-3</id>
    </interactant>
    <interactant intactId="EBI-10172526">
        <id>Q9UJV3-2</id>
        <label>MID2</label>
    </interactant>
    <organismsDiffer>false</organismsDiffer>
    <experiments>3</experiments>
</comment>
<comment type="interaction">
    <interactant intactId="EBI-10177272">
        <id>P15622-3</id>
    </interactant>
    <interactant intactId="EBI-742948">
        <id>Q5JR59</id>
        <label>MTUS2</label>
    </interactant>
    <organismsDiffer>false</organismsDiffer>
    <experiments>3</experiments>
</comment>
<comment type="interaction">
    <interactant intactId="EBI-10177272">
        <id>P15622-3</id>
    </interactant>
    <interactant intactId="EBI-17491620">
        <id>P13349</id>
        <label>MYF5</label>
    </interactant>
    <organismsDiffer>false</organismsDiffer>
    <experiments>3</experiments>
</comment>
<comment type="interaction">
    <interactant intactId="EBI-10177272">
        <id>P15622-3</id>
    </interactant>
    <interactant intactId="EBI-928842">
        <id>Q9GZM8</id>
        <label>NDEL1</label>
    </interactant>
    <organismsDiffer>false</organismsDiffer>
    <experiments>5</experiments>
</comment>
<comment type="interaction">
    <interactant intactId="EBI-10177272">
        <id>P15622-3</id>
    </interactant>
    <interactant intactId="EBI-10977819">
        <id>Q0ZGT2-4</id>
        <label>NEXN</label>
    </interactant>
    <organismsDiffer>false</organismsDiffer>
    <experiments>6</experiments>
</comment>
<comment type="interaction">
    <interactant intactId="EBI-10177272">
        <id>P15622-3</id>
    </interactant>
    <interactant intactId="EBI-398874">
        <id>Q9UBU9</id>
        <label>NXF1</label>
    </interactant>
    <organismsDiffer>false</organismsDiffer>
    <experiments>3</experiments>
</comment>
<comment type="interaction">
    <interactant intactId="EBI-10177272">
        <id>P15622-3</id>
    </interactant>
    <interactant intactId="EBI-14066006">
        <id>Q4G0R1</id>
        <label>PIBF1</label>
    </interactant>
    <organismsDiffer>false</organismsDiffer>
    <experiments>3</experiments>
</comment>
<comment type="interaction">
    <interactant intactId="EBI-10177272">
        <id>P15622-3</id>
    </interactant>
    <interactant intactId="EBI-79165">
        <id>Q9NRD5</id>
        <label>PICK1</label>
    </interactant>
    <organismsDiffer>false</organismsDiffer>
    <experiments>3</experiments>
</comment>
<comment type="interaction">
    <interactant intactId="EBI-10177272">
        <id>P15622-3</id>
    </interactant>
    <interactant intactId="EBI-742388">
        <id>Q9H8W4</id>
        <label>PLEKHF2</label>
    </interactant>
    <organismsDiffer>false</organismsDiffer>
    <experiments>3</experiments>
</comment>
<comment type="interaction">
    <interactant intactId="EBI-10177272">
        <id>P15622-3</id>
    </interactant>
    <interactant intactId="EBI-3957793">
        <id>Q9GZV8</id>
        <label>PRDM14</label>
    </interactant>
    <organismsDiffer>false</organismsDiffer>
    <experiments>3</experiments>
</comment>
<comment type="interaction">
    <interactant intactId="EBI-10177272">
        <id>P15622-3</id>
    </interactant>
    <interactant intactId="EBI-1567797">
        <id>Q8WWY3</id>
        <label>PRPF31</label>
    </interactant>
    <organismsDiffer>false</organismsDiffer>
    <experiments>6</experiments>
</comment>
<comment type="interaction">
    <interactant intactId="EBI-10177272">
        <id>P15622-3</id>
    </interactant>
    <interactant intactId="EBI-2952709">
        <id>Q92622</id>
        <label>RUBCN</label>
    </interactant>
    <organismsDiffer>false</organismsDiffer>
    <experiments>3</experiments>
</comment>
<comment type="interaction">
    <interactant intactId="EBI-10177272">
        <id>P15622-3</id>
    </interactant>
    <interactant intactId="EBI-11957366">
        <id>Q59EK9-3</id>
        <label>RUNDC3A</label>
    </interactant>
    <organismsDiffer>false</organismsDiffer>
    <experiments>3</experiments>
</comment>
<comment type="interaction">
    <interactant intactId="EBI-10177272">
        <id>P15622-3</id>
    </interactant>
    <interactant intactId="EBI-351113">
        <id>Q69YQ0</id>
        <label>SPECC1L</label>
    </interactant>
    <organismsDiffer>false</organismsDiffer>
    <experiments>3</experiments>
</comment>
<comment type="interaction">
    <interactant intactId="EBI-10177272">
        <id>P15622-3</id>
    </interactant>
    <interactant intactId="EBI-7082156">
        <id>Q7Z698</id>
        <label>SPRED2</label>
    </interactant>
    <organismsDiffer>false</organismsDiffer>
    <experiments>3</experiments>
</comment>
<comment type="interaction">
    <interactant intactId="EBI-10177272">
        <id>P15622-3</id>
    </interactant>
    <interactant intactId="EBI-2212028">
        <id>Q9Y2D8</id>
        <label>SSX2IP</label>
    </interactant>
    <organismsDiffer>false</organismsDiffer>
    <experiments>6</experiments>
</comment>
<comment type="interaction">
    <interactant intactId="EBI-10177272">
        <id>P15622-3</id>
    </interactant>
    <interactant intactId="EBI-712466">
        <id>Q16623</id>
        <label>STX1A</label>
    </interactant>
    <organismsDiffer>false</organismsDiffer>
    <experiments>3</experiments>
</comment>
<comment type="interaction">
    <interactant intactId="EBI-10177272">
        <id>P15622-3</id>
    </interactant>
    <interactant intactId="EBI-7131783">
        <id>Q8N205</id>
        <label>SYNE4</label>
    </interactant>
    <organismsDiffer>false</organismsDiffer>
    <experiments>3</experiments>
</comment>
<comment type="interaction">
    <interactant intactId="EBI-10177272">
        <id>P15622-3</id>
    </interactant>
    <interactant intactId="EBI-743871">
        <id>P04155</id>
        <label>TFF1</label>
    </interactant>
    <organismsDiffer>false</organismsDiffer>
    <experiments>3</experiments>
</comment>
<comment type="interaction">
    <interactant intactId="EBI-10177272">
        <id>P15622-3</id>
    </interactant>
    <interactant intactId="EBI-11018037">
        <id>Q13470-2</id>
        <label>TNK1</label>
    </interactant>
    <organismsDiffer>false</organismsDiffer>
    <experiments>3</experiments>
</comment>
<comment type="interaction">
    <interactant intactId="EBI-10177272">
        <id>P15622-3</id>
    </interactant>
    <interactant intactId="EBI-949753">
        <id>Q63HR2</id>
        <label>TNS2</label>
    </interactant>
    <organismsDiffer>false</organismsDiffer>
    <experiments>3</experiments>
</comment>
<comment type="interaction">
    <interactant intactId="EBI-10177272">
        <id>P15622-3</id>
    </interactant>
    <interactant intactId="EBI-373403">
        <id>O95985</id>
        <label>TOP3B</label>
    </interactant>
    <organismsDiffer>false</organismsDiffer>
    <experiments>3</experiments>
</comment>
<comment type="interaction">
    <interactant intactId="EBI-10177272">
        <id>P15622-3</id>
    </interactant>
    <interactant intactId="EBI-355744">
        <id>Q12933</id>
        <label>TRAF2</label>
    </interactant>
    <organismsDiffer>false</organismsDiffer>
    <experiments>3</experiments>
</comment>
<comment type="interaction">
    <interactant intactId="EBI-10177272">
        <id>P15622-3</id>
    </interactant>
    <interactant intactId="EBI-740098">
        <id>P36406</id>
        <label>TRIM23</label>
    </interactant>
    <organismsDiffer>false</organismsDiffer>
    <experiments>3</experiments>
</comment>
<comment type="interaction">
    <interactant intactId="EBI-10177272">
        <id>P15622-3</id>
    </interactant>
    <interactant intactId="EBI-719493">
        <id>P14373</id>
        <label>TRIM27</label>
    </interactant>
    <organismsDiffer>false</organismsDiffer>
    <experiments>3</experiments>
</comment>
<comment type="interaction">
    <interactant intactId="EBI-10177272">
        <id>P15622-3</id>
    </interactant>
    <interactant intactId="EBI-725997">
        <id>Q8WV44</id>
        <label>TRIM41</label>
    </interactant>
    <organismsDiffer>false</organismsDiffer>
    <experiments>9</experiments>
</comment>
<comment type="interaction">
    <interactant intactId="EBI-10177272">
        <id>P15622-3</id>
    </interactant>
    <interactant intactId="EBI-2130429">
        <id>Q9BYV2</id>
        <label>TRIM54</label>
    </interactant>
    <organismsDiffer>false</organismsDiffer>
    <experiments>6</experiments>
</comment>
<comment type="interaction">
    <interactant intactId="EBI-10177272">
        <id>P15622-3</id>
    </interactant>
    <interactant intactId="EBI-716093">
        <id>P13994</id>
        <label>YJU2B</label>
    </interactant>
    <organismsDiffer>false</organismsDiffer>
    <experiments>3</experiments>
</comment>
<comment type="interaction">
    <interactant intactId="EBI-10177272">
        <id>P15622-3</id>
    </interactant>
    <interactant intactId="EBI-740718">
        <id>O43298</id>
        <label>ZBTB43</label>
    </interactant>
    <organismsDiffer>false</organismsDiffer>
    <experiments>3</experiments>
</comment>
<comment type="interaction">
    <interactant intactId="EBI-10177272">
        <id>P15622-3</id>
    </interactant>
    <interactant intactId="EBI-7227791">
        <id>Q15916</id>
        <label>ZBTB6</label>
    </interactant>
    <organismsDiffer>false</organismsDiffer>
    <experiments>3</experiments>
</comment>
<comment type="interaction">
    <interactant intactId="EBI-10177272">
        <id>P15622-3</id>
    </interactant>
    <interactant intactId="EBI-742740">
        <id>Q96BR9</id>
        <label>ZBTB8A</label>
    </interactant>
    <organismsDiffer>false</organismsDiffer>
    <experiments>3</experiments>
</comment>
<comment type="interaction">
    <interactant intactId="EBI-10177272">
        <id>P15622-3</id>
    </interactant>
    <interactant intactId="EBI-747993">
        <id>Q9NQZ6</id>
        <label>ZC4H2</label>
    </interactant>
    <organismsDiffer>false</organismsDiffer>
    <experiments>6</experiments>
</comment>
<comment type="interaction">
    <interactant intactId="EBI-10177272">
        <id>P15622-3</id>
    </interactant>
    <interactant intactId="EBI-954111">
        <id>Q8WW36</id>
        <label>ZCCHC13</label>
    </interactant>
    <organismsDiffer>false</organismsDiffer>
    <experiments>3</experiments>
</comment>
<comment type="interaction">
    <interactant intactId="EBI-10177272">
        <id>P15622-3</id>
    </interactant>
    <interactant intactId="EBI-7265024">
        <id>Q8N3Z6</id>
        <label>ZCCHC7</label>
    </interactant>
    <organismsDiffer>false</organismsDiffer>
    <experiments>3</experiments>
</comment>
<comment type="interaction">
    <interactant intactId="EBI-10177272">
        <id>P15622-3</id>
    </interactant>
    <interactant intactId="EBI-2555749">
        <id>Q6P2D0</id>
        <label>ZFP1</label>
    </interactant>
    <organismsDiffer>false</organismsDiffer>
    <experiments>3</experiments>
</comment>
<comment type="interaction">
    <interactant intactId="EBI-10177272">
        <id>P15622-3</id>
    </interactant>
    <interactant intactId="EBI-741694">
        <id>P49910</id>
        <label>ZNF165</label>
    </interactant>
    <organismsDiffer>false</organismsDiffer>
    <experiments>3</experiments>
</comment>
<comment type="interaction">
    <interactant intactId="EBI-10177272">
        <id>P15622-3</id>
    </interactant>
    <interactant intactId="EBI-3438881">
        <id>Q9Y473</id>
        <label>ZNF175</label>
    </interactant>
    <organismsDiffer>false</organismsDiffer>
    <experiments>3</experiments>
</comment>
<comment type="interaction">
    <interactant intactId="EBI-10177272">
        <id>P15622-3</id>
    </interactant>
    <interactant intactId="EBI-751960">
        <id>O95125</id>
        <label>ZNF202</label>
    </interactant>
    <organismsDiffer>false</organismsDiffer>
    <experiments>3</experiments>
</comment>
<comment type="interaction">
    <interactant intactId="EBI-10177272">
        <id>P15622-3</id>
    </interactant>
    <interactant intactId="EBI-10177272">
        <id>P15622-3</id>
        <label>ZNF250</label>
    </interactant>
    <organismsDiffer>false</organismsDiffer>
    <experiments>4</experiments>
</comment>
<comment type="interaction">
    <interactant intactId="EBI-10177272">
        <id>P15622-3</id>
    </interactant>
    <interactant intactId="EBI-373456">
        <id>Q9Y3S2</id>
        <label>ZNF330</label>
    </interactant>
    <organismsDiffer>false</organismsDiffer>
    <experiments>3</experiments>
</comment>
<comment type="interaction">
    <interactant intactId="EBI-10177272">
        <id>P15622-3</id>
    </interactant>
    <interactant intactId="EBI-2818408">
        <id>Q14585</id>
        <label>ZNF345</label>
    </interactant>
    <organismsDiffer>false</organismsDiffer>
    <experiments>3</experiments>
</comment>
<comment type="interaction">
    <interactant intactId="EBI-10177272">
        <id>P15622-3</id>
    </interactant>
    <interactant intactId="EBI-2555738">
        <id>Q14592</id>
        <label>ZNF460</label>
    </interactant>
    <organismsDiffer>false</organismsDiffer>
    <experiments>3</experiments>
</comment>
<comment type="interaction">
    <interactant intactId="EBI-10177272">
        <id>P15622-3</id>
    </interactant>
    <interactant intactId="EBI-751409">
        <id>Q8WTR7</id>
        <label>ZNF473</label>
    </interactant>
    <organismsDiffer>false</organismsDiffer>
    <experiments>3</experiments>
</comment>
<comment type="interaction">
    <interactant intactId="EBI-10177272">
        <id>P15622-3</id>
    </interactant>
    <interactant intactId="EBI-12895421">
        <id>Q8IVP9</id>
        <label>ZNF547</label>
    </interactant>
    <organismsDiffer>false</organismsDiffer>
    <experiments>3</experiments>
</comment>
<comment type="interaction">
    <interactant intactId="EBI-10177272">
        <id>P15622-3</id>
    </interactant>
    <interactant intactId="EBI-8490788">
        <id>Q68EA5</id>
        <label>ZNF57</label>
    </interactant>
    <organismsDiffer>false</organismsDiffer>
    <experiments>3</experiments>
</comment>
<comment type="interaction">
    <interactant intactId="EBI-10177272">
        <id>P15622-3</id>
    </interactant>
    <interactant intactId="EBI-10172590">
        <id>Q7Z3I7</id>
        <label>ZNF572</label>
    </interactant>
    <organismsDiffer>false</organismsDiffer>
    <experiments>3</experiments>
</comment>
<comment type="interaction">
    <interactant intactId="EBI-10177272">
        <id>P15622-3</id>
    </interactant>
    <interactant intactId="EBI-947476">
        <id>Q9UID6</id>
        <label>ZNF639</label>
    </interactant>
    <organismsDiffer>false</organismsDiffer>
    <experiments>3</experiments>
</comment>
<comment type="interaction">
    <interactant intactId="EBI-10177272">
        <id>P15622-3</id>
    </interactant>
    <interactant intactId="EBI-11985915">
        <id>Q5T619</id>
        <label>ZNF648</label>
    </interactant>
    <organismsDiffer>false</organismsDiffer>
    <experiments>5</experiments>
</comment>
<comment type="interaction">
    <interactant intactId="EBI-10177272">
        <id>P15622-3</id>
    </interactant>
    <interactant intactId="EBI-12817597">
        <id>Q96K58-2</id>
        <label>ZNF668</label>
    </interactant>
    <organismsDiffer>false</organismsDiffer>
    <experiments>3</experiments>
</comment>
<comment type="interaction">
    <interactant intactId="EBI-10177272">
        <id>P15622-3</id>
    </interactant>
    <interactant intactId="EBI-1210580">
        <id>Q9H5H4</id>
        <label>ZNF768</label>
    </interactant>
    <organismsDiffer>false</organismsDiffer>
    <experiments>3</experiments>
</comment>
<comment type="interaction">
    <interactant intactId="EBI-10177272">
        <id>P15622-3</id>
    </interactant>
    <interactant intactId="EBI-10240849">
        <id>Q3KQV3</id>
        <label>ZNF792</label>
    </interactant>
    <organismsDiffer>false</organismsDiffer>
    <experiments>3</experiments>
</comment>
<comment type="interaction">
    <interactant intactId="EBI-10177272">
        <id>P15622-3</id>
    </interactant>
    <interactant intactId="EBI-11962574">
        <id>Q96EG3</id>
        <label>ZNF837</label>
    </interactant>
    <organismsDiffer>false</organismsDiffer>
    <experiments>3</experiments>
</comment>
<comment type="interaction">
    <interactant intactId="EBI-10177272">
        <id>P15622-3</id>
    </interactant>
    <interactant intactId="EBI-527853">
        <id>Q9UGI0</id>
        <label>ZRANB1</label>
    </interactant>
    <organismsDiffer>false</organismsDiffer>
    <experiments>3</experiments>
</comment>
<comment type="subcellular location">
    <subcellularLocation>
        <location evidence="5">Nucleus</location>
    </subcellularLocation>
</comment>
<comment type="alternative products">
    <event type="alternative splicing"/>
    <isoform>
        <id>P15622-1</id>
        <name>1</name>
        <sequence type="displayed"/>
    </isoform>
    <isoform>
        <id>P15622-2</id>
        <name>2</name>
        <sequence type="described" ref="VSP_011039 VSP_011040"/>
    </isoform>
    <isoform>
        <id>P15622-3</id>
        <name>3</name>
        <sequence type="described" ref="VSP_011039"/>
    </isoform>
</comment>
<comment type="similarity">
    <text evidence="5">Belongs to the krueppel C2H2-type zinc-finger protein family.</text>
</comment>
<comment type="sequence caution" evidence="5">
    <conflict type="erroneous initiation">
        <sequence resource="EMBL-CDS" id="BAD92047"/>
    </conflict>
    <text>Extended N-terminus.</text>
</comment>
<comment type="sequence caution" evidence="5">
    <conflict type="frameshift">
        <sequence resource="EMBL-CDS" id="CAA34358"/>
    </conflict>
</comment>
<evidence type="ECO:0000255" key="1">
    <source>
        <dbReference type="PROSITE-ProRule" id="PRU00042"/>
    </source>
</evidence>
<evidence type="ECO:0000255" key="2">
    <source>
        <dbReference type="PROSITE-ProRule" id="PRU00119"/>
    </source>
</evidence>
<evidence type="ECO:0000303" key="3">
    <source>
    </source>
</evidence>
<evidence type="ECO:0000303" key="4">
    <source ref="2"/>
</evidence>
<evidence type="ECO:0000305" key="5"/>
<evidence type="ECO:0007744" key="6">
    <source>
    </source>
</evidence>
<evidence type="ECO:0007744" key="7">
    <source>
    </source>
</evidence>
<name>ZN250_HUMAN</name>
<organism>
    <name type="scientific">Homo sapiens</name>
    <name type="common">Human</name>
    <dbReference type="NCBI Taxonomy" id="9606"/>
    <lineage>
        <taxon>Eukaryota</taxon>
        <taxon>Metazoa</taxon>
        <taxon>Chordata</taxon>
        <taxon>Craniata</taxon>
        <taxon>Vertebrata</taxon>
        <taxon>Euteleostomi</taxon>
        <taxon>Mammalia</taxon>
        <taxon>Eutheria</taxon>
        <taxon>Euarchontoglires</taxon>
        <taxon>Primates</taxon>
        <taxon>Haplorrhini</taxon>
        <taxon>Catarrhini</taxon>
        <taxon>Hominidae</taxon>
        <taxon>Homo</taxon>
    </lineage>
</organism>
<proteinExistence type="evidence at protein level"/>
<protein>
    <recommendedName>
        <fullName>Zinc finger protein 250</fullName>
    </recommendedName>
    <alternativeName>
        <fullName>Zinc finger protein 647</fullName>
    </alternativeName>
</protein>
<sequence>MAAARLLPVPAGPQPLSFQAKLTFEDVAVLLSQDEWDRLCPAQRGLYRNVMMETYGNVVSLGLPGSKPDIISQLERGEDPWVLDRKGAKKSQGLWSDYSDNLKYDHTTACTQQDSLSCPWECETKGESQNTDLSPKPLISEQTVILGKTPLGRIDQENNETKQSFCLSPNSVDHREVQVLSQSMPLTPHQAVPSGERPYMCVECGKCFGRSSHLLQHQRIHTGEKPYVCSVCGKAFSQSSVLSKHRRIHTGEKPYECNECGKAFRVSSDLAQHHKIHTGEKPHECLECRKAFTQLSHLIQHQRIHTGERPYVCPLCGKAFNHSTVLRSHQRVHTGEKPHRCNECGKTFSVKRTLLQHQRIHTGEKPYTCSECGKAFSDRSVLIQHHNVHTGEKPYECSECGKTFSHRSTLMNHERIHTEEKPYACYECGKAFVQHSHLIQHQRVHTGEKPYVCGECGHAFSARRSLIQHERIHTGEKPFQCTECGKAFSLKATLIVHLRTHTGEKPYECNSCGKAFSQYSVLIQHQRIHTGEKPYECGECGRAFNQHGHLIQHQKVHRKL</sequence>
<feature type="chain" id="PRO_0000047483" description="Zinc finger protein 250">
    <location>
        <begin position="1"/>
        <end position="560"/>
    </location>
</feature>
<feature type="domain" description="KRAB" evidence="2">
    <location>
        <begin position="22"/>
        <end position="93"/>
    </location>
</feature>
<feature type="zinc finger region" description="C2H2-type 1" evidence="1">
    <location>
        <begin position="199"/>
        <end position="221"/>
    </location>
</feature>
<feature type="zinc finger region" description="C2H2-type 2" evidence="1">
    <location>
        <begin position="227"/>
        <end position="249"/>
    </location>
</feature>
<feature type="zinc finger region" description="C2H2-type 3" evidence="1">
    <location>
        <begin position="255"/>
        <end position="277"/>
    </location>
</feature>
<feature type="zinc finger region" description="C2H2-type 4" evidence="1">
    <location>
        <begin position="283"/>
        <end position="305"/>
    </location>
</feature>
<feature type="zinc finger region" description="C2H2-type 5" evidence="1">
    <location>
        <begin position="311"/>
        <end position="333"/>
    </location>
</feature>
<feature type="zinc finger region" description="C2H2-type 6" evidence="1">
    <location>
        <begin position="339"/>
        <end position="361"/>
    </location>
</feature>
<feature type="zinc finger region" description="C2H2-type 7" evidence="1">
    <location>
        <begin position="367"/>
        <end position="389"/>
    </location>
</feature>
<feature type="zinc finger region" description="C2H2-type 8" evidence="1">
    <location>
        <begin position="395"/>
        <end position="417"/>
    </location>
</feature>
<feature type="zinc finger region" description="C2H2-type 9" evidence="1">
    <location>
        <begin position="423"/>
        <end position="445"/>
    </location>
</feature>
<feature type="zinc finger region" description="C2H2-type 10" evidence="1">
    <location>
        <begin position="451"/>
        <end position="473"/>
    </location>
</feature>
<feature type="zinc finger region" description="C2H2-type 11" evidence="1">
    <location>
        <begin position="479"/>
        <end position="501"/>
    </location>
</feature>
<feature type="zinc finger region" description="C2H2-type 12" evidence="1">
    <location>
        <begin position="507"/>
        <end position="529"/>
    </location>
</feature>
<feature type="zinc finger region" description="C2H2-type 13" evidence="1">
    <location>
        <begin position="535"/>
        <end position="557"/>
    </location>
</feature>
<feature type="cross-link" description="Glycyl lysine isopeptide (Lys-Gly) (interchain with G-Cter in SUMO2)" evidence="7">
    <location>
        <position position="125"/>
    </location>
</feature>
<feature type="cross-link" description="Glycyl lysine isopeptide (Lys-Gly) (interchain with G-Cter in SUMO2)" evidence="7">
    <location>
        <position position="136"/>
    </location>
</feature>
<feature type="cross-link" description="Glycyl lysine isopeptide (Lys-Gly) (interchain with G-Cter in SUMO2)" evidence="7">
    <location>
        <position position="148"/>
    </location>
</feature>
<feature type="cross-link" description="Glycyl lysine isopeptide (Lys-Gly) (interchain with G-Cter in SUMO2)" evidence="6 7">
    <location>
        <position position="162"/>
    </location>
</feature>
<feature type="cross-link" description="Glycyl lysine isopeptide (Lys-Gly) (interchain with G-Cter in SUMO2)" evidence="7">
    <location>
        <position position="225"/>
    </location>
</feature>
<feature type="cross-link" description="Glycyl lysine isopeptide (Lys-Gly) (interchain with G-Cter in SUMO2)" evidence="7">
    <location>
        <position position="421"/>
    </location>
</feature>
<feature type="splice variant" id="VSP_011039" description="In isoform 2 and isoform 3." evidence="3 4">
    <location>
        <begin position="15"/>
        <end position="19"/>
    </location>
</feature>
<feature type="splice variant" id="VSP_011040" description="In isoform 2." evidence="3">
    <location>
        <begin position="366"/>
        <end position="477"/>
    </location>
</feature>
<feature type="sequence conflict" description="In Ref. 6." evidence="5" ref="6">
    <original>AFSQYSV</original>
    <variation>PSASTQL</variation>
    <location>
        <begin position="515"/>
        <end position="521"/>
    </location>
</feature>
<feature type="sequence conflict" description="In Ref. 6." evidence="5" ref="6">
    <original>R</original>
    <variation>G</variation>
    <location>
        <position position="542"/>
    </location>
</feature>
<dbReference type="EMBL" id="AK095705">
    <property type="protein sequence ID" value="BAC04614.1"/>
    <property type="molecule type" value="mRNA"/>
</dbReference>
<dbReference type="EMBL" id="AB208810">
    <property type="protein sequence ID" value="BAD92047.1"/>
    <property type="status" value="ALT_INIT"/>
    <property type="molecule type" value="mRNA"/>
</dbReference>
<dbReference type="EMBL" id="AF235103">
    <property type="status" value="NOT_ANNOTATED_CDS"/>
    <property type="molecule type" value="Genomic_DNA"/>
</dbReference>
<dbReference type="EMBL" id="CH471162">
    <property type="protein sequence ID" value="EAW82029.1"/>
    <property type="molecule type" value="Genomic_DNA"/>
</dbReference>
<dbReference type="EMBL" id="CH471162">
    <property type="protein sequence ID" value="EAW82030.1"/>
    <property type="molecule type" value="Genomic_DNA"/>
</dbReference>
<dbReference type="EMBL" id="BC017091">
    <property type="protein sequence ID" value="AAH17091.2"/>
    <property type="molecule type" value="mRNA"/>
</dbReference>
<dbReference type="EMBL" id="X16282">
    <property type="protein sequence ID" value="CAA34358.1"/>
    <property type="status" value="ALT_FRAME"/>
    <property type="molecule type" value="mRNA"/>
</dbReference>
<dbReference type="CCDS" id="CCDS34972.1">
    <molecule id="P15622-1"/>
</dbReference>
<dbReference type="CCDS" id="CCDS55282.1">
    <molecule id="P15622-3"/>
</dbReference>
<dbReference type="PIR" id="S06781">
    <property type="entry name" value="S06781"/>
</dbReference>
<dbReference type="RefSeq" id="NP_001103159.1">
    <molecule id="P15622-3"/>
    <property type="nucleotide sequence ID" value="NM_001109689.4"/>
</dbReference>
<dbReference type="RefSeq" id="NP_001350027.1">
    <molecule id="P15622-1"/>
    <property type="nucleotide sequence ID" value="NM_001363098.2"/>
</dbReference>
<dbReference type="RefSeq" id="NP_001350028.1">
    <molecule id="P15622-1"/>
    <property type="nucleotide sequence ID" value="NM_001363099.2"/>
</dbReference>
<dbReference type="RefSeq" id="NP_001350029.1">
    <molecule id="P15622-3"/>
    <property type="nucleotide sequence ID" value="NM_001363100.2"/>
</dbReference>
<dbReference type="RefSeq" id="NP_001350030.1">
    <molecule id="P15622-3"/>
    <property type="nucleotide sequence ID" value="NM_001363101.2"/>
</dbReference>
<dbReference type="RefSeq" id="NP_001350031.1">
    <molecule id="P15622-3"/>
    <property type="nucleotide sequence ID" value="NM_001363102.2"/>
</dbReference>
<dbReference type="RefSeq" id="NP_001350032.1">
    <molecule id="P15622-3"/>
    <property type="nucleotide sequence ID" value="NM_001363103.2"/>
</dbReference>
<dbReference type="RefSeq" id="NP_066405.1">
    <molecule id="P15622-1"/>
    <property type="nucleotide sequence ID" value="NM_021061.5"/>
</dbReference>
<dbReference type="RefSeq" id="XP_005272384.1">
    <property type="nucleotide sequence ID" value="XM_005272327.1"/>
</dbReference>
<dbReference type="RefSeq" id="XP_005272385.1">
    <property type="nucleotide sequence ID" value="XM_005272328.3"/>
</dbReference>
<dbReference type="RefSeq" id="XP_006716675.1">
    <property type="nucleotide sequence ID" value="XM_006716612.3"/>
</dbReference>
<dbReference type="RefSeq" id="XP_006716676.1">
    <property type="nucleotide sequence ID" value="XM_006716613.3"/>
</dbReference>
<dbReference type="RefSeq" id="XP_011515511.1">
    <property type="nucleotide sequence ID" value="XM_011517209.1"/>
</dbReference>
<dbReference type="RefSeq" id="XP_047278020.1">
    <molecule id="P15622-1"/>
    <property type="nucleotide sequence ID" value="XM_047422064.1"/>
</dbReference>
<dbReference type="SMR" id="P15622"/>
<dbReference type="BioGRID" id="121830">
    <property type="interactions" value="130"/>
</dbReference>
<dbReference type="FunCoup" id="P15622">
    <property type="interactions" value="88"/>
</dbReference>
<dbReference type="IntAct" id="P15622">
    <property type="interactions" value="117"/>
</dbReference>
<dbReference type="MINT" id="P15622"/>
<dbReference type="STRING" id="9606.ENSP00000292579"/>
<dbReference type="iPTMnet" id="P15622"/>
<dbReference type="PhosphoSitePlus" id="P15622"/>
<dbReference type="BioMuta" id="ZNF250"/>
<dbReference type="DMDM" id="50403721"/>
<dbReference type="REPRODUCTION-2DPAGE" id="P15622"/>
<dbReference type="jPOST" id="P15622"/>
<dbReference type="MassIVE" id="P15622"/>
<dbReference type="PaxDb" id="9606-ENSP00000292579"/>
<dbReference type="PeptideAtlas" id="P15622"/>
<dbReference type="ProteomicsDB" id="12774"/>
<dbReference type="ProteomicsDB" id="53193">
    <molecule id="P15622-1"/>
</dbReference>
<dbReference type="ProteomicsDB" id="53194">
    <molecule id="P15622-2"/>
</dbReference>
<dbReference type="Pumba" id="P15622"/>
<dbReference type="Antibodypedia" id="15013">
    <property type="antibodies" value="11 antibodies from 9 providers"/>
</dbReference>
<dbReference type="DNASU" id="58500"/>
<dbReference type="Ensembl" id="ENST00000292579.11">
    <molecule id="P15622-1"/>
    <property type="protein sequence ID" value="ENSP00000292579.7"/>
    <property type="gene ID" value="ENSG00000196150.14"/>
</dbReference>
<dbReference type="Ensembl" id="ENST00000417550.7">
    <molecule id="P15622-3"/>
    <property type="protein sequence ID" value="ENSP00000393442.2"/>
    <property type="gene ID" value="ENSG00000196150.14"/>
</dbReference>
<dbReference type="GeneID" id="58500"/>
<dbReference type="KEGG" id="hsa:58500"/>
<dbReference type="MANE-Select" id="ENST00000417550.7">
    <molecule id="P15622-3"/>
    <property type="protein sequence ID" value="ENSP00000393442.2"/>
    <property type="RefSeq nucleotide sequence ID" value="NM_001109689.4"/>
    <property type="RefSeq protein sequence ID" value="NP_001103159.1"/>
</dbReference>
<dbReference type="UCSC" id="uc003zeq.4">
    <molecule id="P15622-1"/>
    <property type="organism name" value="human"/>
</dbReference>
<dbReference type="AGR" id="HGNC:13044"/>
<dbReference type="CTD" id="58500"/>
<dbReference type="DisGeNET" id="58500"/>
<dbReference type="GeneCards" id="ZNF250"/>
<dbReference type="HGNC" id="HGNC:13044">
    <property type="gene designation" value="ZNF250"/>
</dbReference>
<dbReference type="HPA" id="ENSG00000196150">
    <property type="expression patterns" value="Low tissue specificity"/>
</dbReference>
<dbReference type="neXtProt" id="NX_P15622"/>
<dbReference type="OpenTargets" id="ENSG00000196150"/>
<dbReference type="PharmGKB" id="PA37622"/>
<dbReference type="VEuPathDB" id="HostDB:ENSG00000196150"/>
<dbReference type="eggNOG" id="KOG1721">
    <property type="taxonomic scope" value="Eukaryota"/>
</dbReference>
<dbReference type="GeneTree" id="ENSGT00940000162306"/>
<dbReference type="HOGENOM" id="CLU_002678_44_5_1"/>
<dbReference type="InParanoid" id="P15622"/>
<dbReference type="OMA" id="CPWECEN"/>
<dbReference type="OrthoDB" id="9411774at2759"/>
<dbReference type="PAN-GO" id="P15622">
    <property type="GO annotations" value="4 GO annotations based on evolutionary models"/>
</dbReference>
<dbReference type="PhylomeDB" id="P15622"/>
<dbReference type="TreeFam" id="TF341817"/>
<dbReference type="PathwayCommons" id="P15622"/>
<dbReference type="Reactome" id="R-HSA-212436">
    <property type="pathway name" value="Generic Transcription Pathway"/>
</dbReference>
<dbReference type="SignaLink" id="P15622"/>
<dbReference type="BioGRID-ORCS" id="58500">
    <property type="hits" value="14 hits in 1191 CRISPR screens"/>
</dbReference>
<dbReference type="GenomeRNAi" id="58500"/>
<dbReference type="Pharos" id="P15622">
    <property type="development level" value="Tdark"/>
</dbReference>
<dbReference type="PRO" id="PR:P15622"/>
<dbReference type="Proteomes" id="UP000005640">
    <property type="component" value="Chromosome 8"/>
</dbReference>
<dbReference type="RNAct" id="P15622">
    <property type="molecule type" value="protein"/>
</dbReference>
<dbReference type="Bgee" id="ENSG00000196150">
    <property type="expression patterns" value="Expressed in cortical plate and 122 other cell types or tissues"/>
</dbReference>
<dbReference type="ExpressionAtlas" id="P15622">
    <property type="expression patterns" value="baseline and differential"/>
</dbReference>
<dbReference type="GO" id="GO:0005634">
    <property type="term" value="C:nucleus"/>
    <property type="evidence" value="ECO:0000318"/>
    <property type="project" value="GO_Central"/>
</dbReference>
<dbReference type="GO" id="GO:0000981">
    <property type="term" value="F:DNA-binding transcription factor activity, RNA polymerase II-specific"/>
    <property type="evidence" value="ECO:0000318"/>
    <property type="project" value="GO_Central"/>
</dbReference>
<dbReference type="GO" id="GO:0042802">
    <property type="term" value="F:identical protein binding"/>
    <property type="evidence" value="ECO:0000353"/>
    <property type="project" value="IntAct"/>
</dbReference>
<dbReference type="GO" id="GO:0000978">
    <property type="term" value="F:RNA polymerase II cis-regulatory region sequence-specific DNA binding"/>
    <property type="evidence" value="ECO:0000318"/>
    <property type="project" value="GO_Central"/>
</dbReference>
<dbReference type="GO" id="GO:1990837">
    <property type="term" value="F:sequence-specific double-stranded DNA binding"/>
    <property type="evidence" value="ECO:0000314"/>
    <property type="project" value="ARUK-UCL"/>
</dbReference>
<dbReference type="GO" id="GO:0008270">
    <property type="term" value="F:zinc ion binding"/>
    <property type="evidence" value="ECO:0007669"/>
    <property type="project" value="UniProtKB-KW"/>
</dbReference>
<dbReference type="GO" id="GO:0006357">
    <property type="term" value="P:regulation of transcription by RNA polymerase II"/>
    <property type="evidence" value="ECO:0000318"/>
    <property type="project" value="GO_Central"/>
</dbReference>
<dbReference type="CDD" id="cd07765">
    <property type="entry name" value="KRAB_A-box"/>
    <property type="match status" value="1"/>
</dbReference>
<dbReference type="FunFam" id="3.30.160.60:FF:000555">
    <property type="entry name" value="Zinc finger protein 1 homolog"/>
    <property type="match status" value="1"/>
</dbReference>
<dbReference type="FunFam" id="3.30.160.60:FF:000914">
    <property type="entry name" value="Zinc finger protein 16"/>
    <property type="match status" value="1"/>
</dbReference>
<dbReference type="FunFam" id="3.30.160.60:FF:000635">
    <property type="entry name" value="zinc finger protein 250 isoform X2"/>
    <property type="match status" value="1"/>
</dbReference>
<dbReference type="FunFam" id="3.30.160.60:FF:000987">
    <property type="entry name" value="Zinc finger protein 275"/>
    <property type="match status" value="1"/>
</dbReference>
<dbReference type="FunFam" id="3.30.160.60:FF:002343">
    <property type="entry name" value="Zinc finger protein 33A"/>
    <property type="match status" value="2"/>
</dbReference>
<dbReference type="FunFam" id="3.30.160.60:FF:000387">
    <property type="entry name" value="Zinc finger protein 354A"/>
    <property type="match status" value="3"/>
</dbReference>
<dbReference type="FunFam" id="3.30.160.60:FF:001532">
    <property type="entry name" value="Zinc finger protein 483"/>
    <property type="match status" value="1"/>
</dbReference>
<dbReference type="FunFam" id="3.30.160.60:FF:000197">
    <property type="entry name" value="Zinc finger protein 606"/>
    <property type="match status" value="1"/>
</dbReference>
<dbReference type="FunFam" id="3.30.160.60:FF:000176">
    <property type="entry name" value="zinc finger protein 70"/>
    <property type="match status" value="2"/>
</dbReference>
<dbReference type="Gene3D" id="6.10.140.140">
    <property type="match status" value="1"/>
</dbReference>
<dbReference type="Gene3D" id="3.30.160.60">
    <property type="entry name" value="Classic Zinc Finger"/>
    <property type="match status" value="13"/>
</dbReference>
<dbReference type="InterPro" id="IPR050752">
    <property type="entry name" value="C2H2-ZF_domain"/>
</dbReference>
<dbReference type="InterPro" id="IPR001909">
    <property type="entry name" value="KRAB"/>
</dbReference>
<dbReference type="InterPro" id="IPR036051">
    <property type="entry name" value="KRAB_dom_sf"/>
</dbReference>
<dbReference type="InterPro" id="IPR036236">
    <property type="entry name" value="Znf_C2H2_sf"/>
</dbReference>
<dbReference type="InterPro" id="IPR013087">
    <property type="entry name" value="Znf_C2H2_type"/>
</dbReference>
<dbReference type="PANTHER" id="PTHR24384">
    <property type="entry name" value="FINGER PUTATIVE TRANSCRIPTION FACTOR FAMILY-RELATED"/>
    <property type="match status" value="1"/>
</dbReference>
<dbReference type="PANTHER" id="PTHR24384:SF246">
    <property type="entry name" value="GENE, 19965-RELATED"/>
    <property type="match status" value="1"/>
</dbReference>
<dbReference type="Pfam" id="PF01352">
    <property type="entry name" value="KRAB"/>
    <property type="match status" value="1"/>
</dbReference>
<dbReference type="Pfam" id="PF00096">
    <property type="entry name" value="zf-C2H2"/>
    <property type="match status" value="13"/>
</dbReference>
<dbReference type="SMART" id="SM00349">
    <property type="entry name" value="KRAB"/>
    <property type="match status" value="1"/>
</dbReference>
<dbReference type="SMART" id="SM00355">
    <property type="entry name" value="ZnF_C2H2"/>
    <property type="match status" value="13"/>
</dbReference>
<dbReference type="SUPFAM" id="SSF57667">
    <property type="entry name" value="beta-beta-alpha zinc fingers"/>
    <property type="match status" value="7"/>
</dbReference>
<dbReference type="SUPFAM" id="SSF109640">
    <property type="entry name" value="KRAB domain (Kruppel-associated box)"/>
    <property type="match status" value="1"/>
</dbReference>
<dbReference type="PROSITE" id="PS50805">
    <property type="entry name" value="KRAB"/>
    <property type="match status" value="1"/>
</dbReference>
<dbReference type="PROSITE" id="PS00028">
    <property type="entry name" value="ZINC_FINGER_C2H2_1"/>
    <property type="match status" value="13"/>
</dbReference>
<dbReference type="PROSITE" id="PS50157">
    <property type="entry name" value="ZINC_FINGER_C2H2_2"/>
    <property type="match status" value="13"/>
</dbReference>
<accession>P15622</accession>
<accession>D3DWP1</accession>
<accession>Q59HE9</accession>
<accession>Q8N942</accession>
<accession>Q96AH9</accession>
<reference key="1">
    <citation type="journal article" date="2004" name="Nat. Genet.">
        <title>Complete sequencing and characterization of 21,243 full-length human cDNAs.</title>
        <authorList>
            <person name="Ota T."/>
            <person name="Suzuki Y."/>
            <person name="Nishikawa T."/>
            <person name="Otsuki T."/>
            <person name="Sugiyama T."/>
            <person name="Irie R."/>
            <person name="Wakamatsu A."/>
            <person name="Hayashi K."/>
            <person name="Sato H."/>
            <person name="Nagai K."/>
            <person name="Kimura K."/>
            <person name="Makita H."/>
            <person name="Sekine M."/>
            <person name="Obayashi M."/>
            <person name="Nishi T."/>
            <person name="Shibahara T."/>
            <person name="Tanaka T."/>
            <person name="Ishii S."/>
            <person name="Yamamoto J."/>
            <person name="Saito K."/>
            <person name="Kawai Y."/>
            <person name="Isono Y."/>
            <person name="Nakamura Y."/>
            <person name="Nagahari K."/>
            <person name="Murakami K."/>
            <person name="Yasuda T."/>
            <person name="Iwayanagi T."/>
            <person name="Wagatsuma M."/>
            <person name="Shiratori A."/>
            <person name="Sudo H."/>
            <person name="Hosoiri T."/>
            <person name="Kaku Y."/>
            <person name="Kodaira H."/>
            <person name="Kondo H."/>
            <person name="Sugawara M."/>
            <person name="Takahashi M."/>
            <person name="Kanda K."/>
            <person name="Yokoi T."/>
            <person name="Furuya T."/>
            <person name="Kikkawa E."/>
            <person name="Omura Y."/>
            <person name="Abe K."/>
            <person name="Kamihara K."/>
            <person name="Katsuta N."/>
            <person name="Sato K."/>
            <person name="Tanikawa M."/>
            <person name="Yamazaki M."/>
            <person name="Ninomiya K."/>
            <person name="Ishibashi T."/>
            <person name="Yamashita H."/>
            <person name="Murakawa K."/>
            <person name="Fujimori K."/>
            <person name="Tanai H."/>
            <person name="Kimata M."/>
            <person name="Watanabe M."/>
            <person name="Hiraoka S."/>
            <person name="Chiba Y."/>
            <person name="Ishida S."/>
            <person name="Ono Y."/>
            <person name="Takiguchi S."/>
            <person name="Watanabe S."/>
            <person name="Yosida M."/>
            <person name="Hotuta T."/>
            <person name="Kusano J."/>
            <person name="Kanehori K."/>
            <person name="Takahashi-Fujii A."/>
            <person name="Hara H."/>
            <person name="Tanase T.-O."/>
            <person name="Nomura Y."/>
            <person name="Togiya S."/>
            <person name="Komai F."/>
            <person name="Hara R."/>
            <person name="Takeuchi K."/>
            <person name="Arita M."/>
            <person name="Imose N."/>
            <person name="Musashino K."/>
            <person name="Yuuki H."/>
            <person name="Oshima A."/>
            <person name="Sasaki N."/>
            <person name="Aotsuka S."/>
            <person name="Yoshikawa Y."/>
            <person name="Matsunawa H."/>
            <person name="Ichihara T."/>
            <person name="Shiohata N."/>
            <person name="Sano S."/>
            <person name="Moriya S."/>
            <person name="Momiyama H."/>
            <person name="Satoh N."/>
            <person name="Takami S."/>
            <person name="Terashima Y."/>
            <person name="Suzuki O."/>
            <person name="Nakagawa S."/>
            <person name="Senoh A."/>
            <person name="Mizoguchi H."/>
            <person name="Goto Y."/>
            <person name="Shimizu F."/>
            <person name="Wakebe H."/>
            <person name="Hishigaki H."/>
            <person name="Watanabe T."/>
            <person name="Sugiyama A."/>
            <person name="Takemoto M."/>
            <person name="Kawakami B."/>
            <person name="Yamazaki M."/>
            <person name="Watanabe K."/>
            <person name="Kumagai A."/>
            <person name="Itakura S."/>
            <person name="Fukuzumi Y."/>
            <person name="Fujimori Y."/>
            <person name="Komiyama M."/>
            <person name="Tashiro H."/>
            <person name="Tanigami A."/>
            <person name="Fujiwara T."/>
            <person name="Ono T."/>
            <person name="Yamada K."/>
            <person name="Fujii Y."/>
            <person name="Ozaki K."/>
            <person name="Hirao M."/>
            <person name="Ohmori Y."/>
            <person name="Kawabata A."/>
            <person name="Hikiji T."/>
            <person name="Kobatake N."/>
            <person name="Inagaki H."/>
            <person name="Ikema Y."/>
            <person name="Okamoto S."/>
            <person name="Okitani R."/>
            <person name="Kawakami T."/>
            <person name="Noguchi S."/>
            <person name="Itoh T."/>
            <person name="Shigeta K."/>
            <person name="Senba T."/>
            <person name="Matsumura K."/>
            <person name="Nakajima Y."/>
            <person name="Mizuno T."/>
            <person name="Morinaga M."/>
            <person name="Sasaki M."/>
            <person name="Togashi T."/>
            <person name="Oyama M."/>
            <person name="Hata H."/>
            <person name="Watanabe M."/>
            <person name="Komatsu T."/>
            <person name="Mizushima-Sugano J."/>
            <person name="Satoh T."/>
            <person name="Shirai Y."/>
            <person name="Takahashi Y."/>
            <person name="Nakagawa K."/>
            <person name="Okumura K."/>
            <person name="Nagase T."/>
            <person name="Nomura N."/>
            <person name="Kikuchi H."/>
            <person name="Masuho Y."/>
            <person name="Yamashita R."/>
            <person name="Nakai K."/>
            <person name="Yada T."/>
            <person name="Nakamura Y."/>
            <person name="Ohara O."/>
            <person name="Isogai T."/>
            <person name="Sugano S."/>
        </authorList>
    </citation>
    <scope>NUCLEOTIDE SEQUENCE [LARGE SCALE MRNA] (ISOFORM 2)</scope>
    <source>
        <tissue>Brain</tissue>
    </source>
</reference>
<reference key="2">
    <citation type="submission" date="2005-03" db="EMBL/GenBank/DDBJ databases">
        <title>Homo sapiens protein coding cDNA.</title>
        <authorList>
            <person name="Totoki Y."/>
            <person name="Toyoda A."/>
            <person name="Takeda T."/>
            <person name="Sakaki Y."/>
            <person name="Tanaka A."/>
            <person name="Yokoyama S."/>
            <person name="Ohara O."/>
            <person name="Nagase T."/>
            <person name="Kikuno R.F."/>
        </authorList>
    </citation>
    <scope>NUCLEOTIDE SEQUENCE [LARGE SCALE MRNA] (ISOFORM 3)</scope>
    <source>
        <tissue>Brain</tissue>
    </source>
</reference>
<reference key="3">
    <citation type="journal article" date="2006" name="Nature">
        <title>DNA sequence and analysis of human chromosome 8.</title>
        <authorList>
            <person name="Nusbaum C."/>
            <person name="Mikkelsen T.S."/>
            <person name="Zody M.C."/>
            <person name="Asakawa S."/>
            <person name="Taudien S."/>
            <person name="Garber M."/>
            <person name="Kodira C.D."/>
            <person name="Schueler M.G."/>
            <person name="Shimizu A."/>
            <person name="Whittaker C.A."/>
            <person name="Chang J.L."/>
            <person name="Cuomo C.A."/>
            <person name="Dewar K."/>
            <person name="FitzGerald M.G."/>
            <person name="Yang X."/>
            <person name="Allen N.R."/>
            <person name="Anderson S."/>
            <person name="Asakawa T."/>
            <person name="Blechschmidt K."/>
            <person name="Bloom T."/>
            <person name="Borowsky M.L."/>
            <person name="Butler J."/>
            <person name="Cook A."/>
            <person name="Corum B."/>
            <person name="DeArellano K."/>
            <person name="DeCaprio D."/>
            <person name="Dooley K.T."/>
            <person name="Dorris L. III"/>
            <person name="Engels R."/>
            <person name="Gloeckner G."/>
            <person name="Hafez N."/>
            <person name="Hagopian D.S."/>
            <person name="Hall J.L."/>
            <person name="Ishikawa S.K."/>
            <person name="Jaffe D.B."/>
            <person name="Kamat A."/>
            <person name="Kudoh J."/>
            <person name="Lehmann R."/>
            <person name="Lokitsang T."/>
            <person name="Macdonald P."/>
            <person name="Major J.E."/>
            <person name="Matthews C.D."/>
            <person name="Mauceli E."/>
            <person name="Menzel U."/>
            <person name="Mihalev A.H."/>
            <person name="Minoshima S."/>
            <person name="Murayama Y."/>
            <person name="Naylor J.W."/>
            <person name="Nicol R."/>
            <person name="Nguyen C."/>
            <person name="O'Leary S.B."/>
            <person name="O'Neill K."/>
            <person name="Parker S.C.J."/>
            <person name="Polley A."/>
            <person name="Raymond C.K."/>
            <person name="Reichwald K."/>
            <person name="Rodriguez J."/>
            <person name="Sasaki T."/>
            <person name="Schilhabel M."/>
            <person name="Siddiqui R."/>
            <person name="Smith C.L."/>
            <person name="Sneddon T.P."/>
            <person name="Talamas J.A."/>
            <person name="Tenzin P."/>
            <person name="Topham K."/>
            <person name="Venkataraman V."/>
            <person name="Wen G."/>
            <person name="Yamazaki S."/>
            <person name="Young S.K."/>
            <person name="Zeng Q."/>
            <person name="Zimmer A.R."/>
            <person name="Rosenthal A."/>
            <person name="Birren B.W."/>
            <person name="Platzer M."/>
            <person name="Shimizu N."/>
            <person name="Lander E.S."/>
        </authorList>
    </citation>
    <scope>NUCLEOTIDE SEQUENCE [LARGE SCALE GENOMIC DNA]</scope>
</reference>
<reference key="4">
    <citation type="submission" date="2005-09" db="EMBL/GenBank/DDBJ databases">
        <authorList>
            <person name="Mural R.J."/>
            <person name="Istrail S."/>
            <person name="Sutton G."/>
            <person name="Florea L."/>
            <person name="Halpern A.L."/>
            <person name="Mobarry C.M."/>
            <person name="Lippert R."/>
            <person name="Walenz B."/>
            <person name="Shatkay H."/>
            <person name="Dew I."/>
            <person name="Miller J.R."/>
            <person name="Flanigan M.J."/>
            <person name="Edwards N.J."/>
            <person name="Bolanos R."/>
            <person name="Fasulo D."/>
            <person name="Halldorsson B.V."/>
            <person name="Hannenhalli S."/>
            <person name="Turner R."/>
            <person name="Yooseph S."/>
            <person name="Lu F."/>
            <person name="Nusskern D.R."/>
            <person name="Shue B.C."/>
            <person name="Zheng X.H."/>
            <person name="Zhong F."/>
            <person name="Delcher A.L."/>
            <person name="Huson D.H."/>
            <person name="Kravitz S.A."/>
            <person name="Mouchard L."/>
            <person name="Reinert K."/>
            <person name="Remington K.A."/>
            <person name="Clark A.G."/>
            <person name="Waterman M.S."/>
            <person name="Eichler E.E."/>
            <person name="Adams M.D."/>
            <person name="Hunkapiller M.W."/>
            <person name="Myers E.W."/>
            <person name="Venter J.C."/>
        </authorList>
    </citation>
    <scope>NUCLEOTIDE SEQUENCE [LARGE SCALE GENOMIC DNA]</scope>
</reference>
<reference key="5">
    <citation type="journal article" date="2004" name="Genome Res.">
        <title>The status, quality, and expansion of the NIH full-length cDNA project: the Mammalian Gene Collection (MGC).</title>
        <authorList>
            <consortium name="The MGC Project Team"/>
        </authorList>
    </citation>
    <scope>NUCLEOTIDE SEQUENCE [LARGE SCALE MRNA] (ISOFORM 1)</scope>
    <source>
        <tissue>Colon</tissue>
    </source>
</reference>
<reference key="6">
    <citation type="submission" date="1989-08" db="EMBL/GenBank/DDBJ databases">
        <authorList>
            <person name="Ammendola S."/>
            <person name="Ciliberto G."/>
        </authorList>
    </citation>
    <scope>NUCLEOTIDE SEQUENCE [MRNA] OF 250-560 (ISOFORM 1)</scope>
</reference>
<reference key="7">
    <citation type="journal article" date="2015" name="Mol. Cell. Proteomics">
        <title>System-wide analysis of SUMOylation dynamics in response to replication stress reveals novel small ubiquitin-like modified target proteins and acceptor lysines relevant for genome stability.</title>
        <authorList>
            <person name="Xiao Z."/>
            <person name="Chang J.G."/>
            <person name="Hendriks I.A."/>
            <person name="Sigurdsson J.O."/>
            <person name="Olsen J.V."/>
            <person name="Vertegaal A.C."/>
        </authorList>
    </citation>
    <scope>SUMOYLATION [LARGE SCALE ANALYSIS] AT LYS-162</scope>
    <scope>IDENTIFICATION BY MASS SPECTROMETRY [LARGE SCALE ANALYSIS]</scope>
</reference>
<reference key="8">
    <citation type="journal article" date="2017" name="Nat. Struct. Mol. Biol.">
        <title>Site-specific mapping of the human SUMO proteome reveals co-modification with phosphorylation.</title>
        <authorList>
            <person name="Hendriks I.A."/>
            <person name="Lyon D."/>
            <person name="Young C."/>
            <person name="Jensen L.J."/>
            <person name="Vertegaal A.C."/>
            <person name="Nielsen M.L."/>
        </authorList>
    </citation>
    <scope>SUMOYLATION [LARGE SCALE ANALYSIS] AT LYS-125; LYS-136; LYS-148; LYS-162; LYS-225 AND LYS-421</scope>
    <scope>IDENTIFICATION BY MASS SPECTROMETRY [LARGE SCALE ANALYSIS]</scope>
</reference>